<dbReference type="EMBL" id="BA000018">
    <property type="protein sequence ID" value="BAB43391.1"/>
    <property type="molecule type" value="Genomic_DNA"/>
</dbReference>
<dbReference type="PIR" id="F90028">
    <property type="entry name" value="F90028"/>
</dbReference>
<dbReference type="RefSeq" id="WP_000717381.1">
    <property type="nucleotide sequence ID" value="NC_002745.2"/>
</dbReference>
<dbReference type="SMR" id="Q7A423"/>
<dbReference type="EnsemblBacteria" id="BAB43391">
    <property type="protein sequence ID" value="BAB43391"/>
    <property type="gene ID" value="BAB43391"/>
</dbReference>
<dbReference type="KEGG" id="sau:SA2093"/>
<dbReference type="HOGENOM" id="CLU_016043_11_0_9"/>
<dbReference type="GO" id="GO:0005576">
    <property type="term" value="C:extracellular region"/>
    <property type="evidence" value="ECO:0007669"/>
    <property type="project" value="UniProtKB-SubCell"/>
</dbReference>
<dbReference type="Gene3D" id="3.90.1720.10">
    <property type="entry name" value="endopeptidase domain like (from Nostoc punctiforme)"/>
    <property type="match status" value="1"/>
</dbReference>
<dbReference type="InterPro" id="IPR007921">
    <property type="entry name" value="CHAP_dom"/>
</dbReference>
<dbReference type="InterPro" id="IPR038765">
    <property type="entry name" value="Papain-like_cys_pep_sf"/>
</dbReference>
<dbReference type="Pfam" id="PF05257">
    <property type="entry name" value="CHAP"/>
    <property type="match status" value="1"/>
</dbReference>
<dbReference type="SUPFAM" id="SSF54001">
    <property type="entry name" value="Cysteine proteinases"/>
    <property type="match status" value="1"/>
</dbReference>
<dbReference type="PROSITE" id="PS50911">
    <property type="entry name" value="CHAP"/>
    <property type="match status" value="1"/>
</dbReference>
<feature type="signal peptide" evidence="2">
    <location>
        <begin position="1"/>
        <end position="27"/>
    </location>
</feature>
<feature type="chain" id="PRO_0000045316" description="Staphylococcal secretory antigen ssaA2">
    <location>
        <begin position="28"/>
        <end position="267"/>
    </location>
</feature>
<feature type="repeat" description="1">
    <location>
        <begin position="83"/>
        <end position="85"/>
    </location>
</feature>
<feature type="repeat" description="2">
    <location>
        <begin position="86"/>
        <end position="88"/>
    </location>
</feature>
<feature type="repeat" description="3">
    <location>
        <begin position="89"/>
        <end position="91"/>
    </location>
</feature>
<feature type="repeat" description="4">
    <location>
        <begin position="95"/>
        <end position="97"/>
    </location>
</feature>
<feature type="repeat" description="5">
    <location>
        <begin position="101"/>
        <end position="103"/>
    </location>
</feature>
<feature type="repeat" description="6">
    <location>
        <begin position="104"/>
        <end position="106"/>
    </location>
</feature>
<feature type="repeat" description="7">
    <location>
        <begin position="113"/>
        <end position="115"/>
    </location>
</feature>
<feature type="domain" description="Peptidase C51" evidence="3">
    <location>
        <begin position="146"/>
        <end position="267"/>
    </location>
</feature>
<feature type="region of interest" description="7 X 3 AA repeats of Y-[NS]-N">
    <location>
        <begin position="83"/>
        <end position="115"/>
    </location>
</feature>
<name>SSAA2_STAAN</name>
<reference key="1">
    <citation type="journal article" date="2001" name="Lancet">
        <title>Whole genome sequencing of meticillin-resistant Staphylococcus aureus.</title>
        <authorList>
            <person name="Kuroda M."/>
            <person name="Ohta T."/>
            <person name="Uchiyama I."/>
            <person name="Baba T."/>
            <person name="Yuzawa H."/>
            <person name="Kobayashi I."/>
            <person name="Cui L."/>
            <person name="Oguchi A."/>
            <person name="Aoki K."/>
            <person name="Nagai Y."/>
            <person name="Lian J.-Q."/>
            <person name="Ito T."/>
            <person name="Kanamori M."/>
            <person name="Matsumaru H."/>
            <person name="Maruyama A."/>
            <person name="Murakami H."/>
            <person name="Hosoyama A."/>
            <person name="Mizutani-Ui Y."/>
            <person name="Takahashi N.K."/>
            <person name="Sawano T."/>
            <person name="Inoue R."/>
            <person name="Kaito C."/>
            <person name="Sekimizu K."/>
            <person name="Hirakawa H."/>
            <person name="Kuhara S."/>
            <person name="Goto S."/>
            <person name="Yabuzaki J."/>
            <person name="Kanehisa M."/>
            <person name="Yamashita A."/>
            <person name="Oshima K."/>
            <person name="Furuya K."/>
            <person name="Yoshino C."/>
            <person name="Shiba T."/>
            <person name="Hattori M."/>
            <person name="Ogasawara N."/>
            <person name="Hayashi H."/>
            <person name="Hiramatsu K."/>
        </authorList>
    </citation>
    <scope>NUCLEOTIDE SEQUENCE [LARGE SCALE GENOMIC DNA]</scope>
    <source>
        <strain>N315</strain>
    </source>
</reference>
<reference key="2">
    <citation type="submission" date="2007-10" db="UniProtKB">
        <title>Shotgun proteomic analysis of total and membrane protein extracts of S. aureus strain N315.</title>
        <authorList>
            <person name="Vaezzadeh A.R."/>
            <person name="Deshusses J."/>
            <person name="Lescuyer P."/>
            <person name="Hochstrasser D.F."/>
        </authorList>
    </citation>
    <scope>IDENTIFICATION BY MASS SPECTROMETRY [LARGE SCALE ANALYSIS]</scope>
    <source>
        <strain>N315</strain>
    </source>
</reference>
<protein>
    <recommendedName>
        <fullName>Staphylococcal secretory antigen ssaA2</fullName>
    </recommendedName>
</protein>
<proteinExistence type="evidence at protein level"/>
<comment type="function">
    <text evidence="1">Not known; immunogenic protein.</text>
</comment>
<comment type="subcellular location">
    <subcellularLocation>
        <location evidence="1">Secreted</location>
    </subcellularLocation>
</comment>
<keyword id="KW-0677">Repeat</keyword>
<keyword id="KW-0964">Secreted</keyword>
<keyword id="KW-0732">Signal</keyword>
<keyword id="KW-0843">Virulence</keyword>
<evidence type="ECO:0000250" key="1"/>
<evidence type="ECO:0000255" key="2"/>
<evidence type="ECO:0000255" key="3">
    <source>
        <dbReference type="PROSITE-ProRule" id="PRU00048"/>
    </source>
</evidence>
<sequence length="267" mass="29327">MKKIATATIATAGFATIAIASGNQAHASEQDNYGYNPNDPTSYSYTYTIDAQGNYHYTWKGNWHPSQLNQDNGYYSYYYYNGYNNYNNYNNGYSYNNYSRYNNYSNNNQSYNYNNYNSYNTNSYRTGGLGASYSTSSNNVQVTTTMAPSSNGRSISSGYTSGRNLYTSGQCTYYVFDRVGGKIGSTWGNASNWANAAARAGYTVNNTPKAGAIMQTTQGAYGHVAYVESVNSNGSVRVSEMNYGYGPGVVTSRTISASQAAGYNFIH</sequence>
<accession>Q7A423</accession>
<gene>
    <name type="primary">ssaA2</name>
    <name type="ordered locus">SA2093</name>
</gene>
<organism>
    <name type="scientific">Staphylococcus aureus (strain N315)</name>
    <dbReference type="NCBI Taxonomy" id="158879"/>
    <lineage>
        <taxon>Bacteria</taxon>
        <taxon>Bacillati</taxon>
        <taxon>Bacillota</taxon>
        <taxon>Bacilli</taxon>
        <taxon>Bacillales</taxon>
        <taxon>Staphylococcaceae</taxon>
        <taxon>Staphylococcus</taxon>
    </lineage>
</organism>